<gene>
    <name type="primary">SLC26A3</name>
    <name type="synonym">DRA</name>
</gene>
<name>S26A3_HUMAN</name>
<proteinExistence type="evidence at protein level"/>
<reference key="1">
    <citation type="journal article" date="1993" name="Proc. Natl. Acad. Sci. U.S.A.">
        <title>Identification of a colon mucosa gene that is down-regulated in colon adenomas and adenocarcinomas.</title>
        <authorList>
            <person name="Schweinfest C.W."/>
            <person name="Henderson K.W."/>
            <person name="Suster S."/>
            <person name="Kondoh N."/>
            <person name="Papas T.S."/>
        </authorList>
    </citation>
    <scope>NUCLEOTIDE SEQUENCE [MRNA]</scope>
    <scope>TISSUE SPECIFICITY</scope>
    <source>
        <tissue>Colon</tissue>
    </source>
</reference>
<reference key="2">
    <citation type="journal article" date="2004" name="Genome Res.">
        <title>The status, quality, and expansion of the NIH full-length cDNA project: the Mammalian Gene Collection (MGC).</title>
        <authorList>
            <consortium name="The MGC Project Team"/>
        </authorList>
    </citation>
    <scope>NUCLEOTIDE SEQUENCE [LARGE SCALE MRNA]</scope>
    <source>
        <tissue>Lung</tissue>
    </source>
</reference>
<reference key="3">
    <citation type="journal article" date="1994" name="Trends Biochem. Sci.">
        <title>Similarities between a soybean nodulin, Neurospora crassa sulphate permease II and a putative human tumour suppressor.</title>
        <authorList>
            <person name="Sandal N.N."/>
            <person name="Marcker K.A."/>
        </authorList>
    </citation>
    <scope>SIMILARITY TO SULFATE PERMEASES</scope>
</reference>
<reference key="4">
    <citation type="journal article" date="2005" name="Biochemistry">
        <title>The CFTR associated protein CAP70 interacts with the apical Cl-/HCO3-exchanger DRA in rabbit small intestinal mucosa.</title>
        <authorList>
            <person name="Rossmann H."/>
            <person name="Jacob P."/>
            <person name="Baisch S."/>
            <person name="Hassoun R."/>
            <person name="Meier J."/>
            <person name="Natour D."/>
            <person name="Yahya K."/>
            <person name="Yun C."/>
            <person name="Biber J."/>
            <person name="Lackner K.J."/>
            <person name="Fiehn W."/>
            <person name="Gregor M."/>
            <person name="Seidler U."/>
            <person name="Lamprecht G."/>
        </authorList>
    </citation>
    <scope>INTERACTION WITH PDZK1</scope>
</reference>
<reference key="5">
    <citation type="journal article" date="2006" name="J. Gen. Physiol.">
        <title>Coupling modes and stoichiometry of Cl-/HCO3- exchange by slc26a3 and slc26a6.</title>
        <authorList>
            <person name="Shcheynikov N."/>
            <person name="Wang Y."/>
            <person name="Park M."/>
            <person name="Ko S.B."/>
            <person name="Dorwart M."/>
            <person name="Naruse S."/>
            <person name="Thomas P.J."/>
            <person name="Muallem S."/>
        </authorList>
    </citation>
    <scope>FUNCTION</scope>
    <scope>TRANSPORTER ACTIVITY</scope>
</reference>
<reference key="6">
    <citation type="journal article" date="2009" name="Am. J. Physiol.">
        <title>Regulation of intestinal Cl-/HCO3- exchanger SLC26A3 by intracellular pH.</title>
        <authorList>
            <person name="Hayashi H."/>
            <person name="Suruga K."/>
            <person name="Yamashita Y."/>
        </authorList>
    </citation>
    <scope>FUNCTION</scope>
    <scope>TRANSPORTER ACTIVITY</scope>
    <scope>ACTIVITY REGULATION</scope>
    <scope>SUBCELLULAR LOCATION</scope>
</reference>
<reference key="7">
    <citation type="journal article" date="2012" name="Am. J. Physiol.">
        <title>Role of N-glycosylation in cell surface expression and protection against proteolysis of the intestinal anion exchanger SLC26A3.</title>
        <authorList>
            <person name="Hayashi H."/>
            <person name="Yamashita Y."/>
        </authorList>
    </citation>
    <scope>GLYCOSYLATION AT ASN-153; ASN-161 AND ASN-165</scope>
    <scope>SUBCELLULAR LOCATION</scope>
    <scope>FUNCTION</scope>
    <scope>TRANSPORTER ACTIVITY</scope>
</reference>
<reference key="8">
    <citation type="journal article" date="2012" name="Cell. Signal.">
        <title>Regulation of SLC26A3 activity by NHERF4 PDZ-mediated interaction.</title>
        <authorList>
            <person name="Lee J.H."/>
            <person name="Nam J.H."/>
            <person name="Park J."/>
            <person name="Kang D.W."/>
            <person name="Kim J.Y."/>
            <person name="Lee M.G."/>
            <person name="Yoon J.S."/>
        </authorList>
    </citation>
    <scope>FUNCTION</scope>
    <scope>TRANSPORTER ACTIVITY</scope>
    <scope>SUBCELLULAR LOCATION</scope>
    <scope>INTERACTION WITH NHERF4</scope>
    <scope>MUTAGENESIS OF 761-GLU--PHE-764</scope>
    <scope>PDZ-BINDING MOTIF</scope>
</reference>
<reference key="9">
    <citation type="journal article" date="1996" name="Nat. Genet.">
        <title>Mutations of the Down-regulated in adenoma (DRA) gene cause congenital chloride diarrhoea.</title>
        <authorList>
            <person name="Hoeglund P."/>
            <person name="Haila S."/>
            <person name="Socha J."/>
            <person name="Tomaszewski L."/>
            <person name="Saarialho-Kere U."/>
            <person name="Karjalainen-Lindsberg M.-L."/>
            <person name="Airola K."/>
            <person name="Holmberg C."/>
            <person name="de la Chapelle A."/>
            <person name="Kere J."/>
        </authorList>
    </citation>
    <scope>VARIANTS DIAR1 LEU-124 AND VAL-318 DEL</scope>
    <scope>VARIANT TRP-307</scope>
</reference>
<reference key="10">
    <citation type="journal article" date="1998" name="Am. J. Hum. Genet.">
        <title>Genetic background of congenital chloride diarrhea in high-incidence populations: Finland, Poland, and Saudi Arabia and Kuwait.</title>
        <authorList>
            <person name="Hoglund P."/>
            <person name="Auranen M."/>
            <person name="Socha J."/>
            <person name="Popinska K."/>
            <person name="Nazer H."/>
            <person name="Rajaram U."/>
            <person name="Al Sanie A."/>
            <person name="Al-Ghanim M."/>
            <person name="Holmberg C."/>
            <person name="de la Chapelle A."/>
            <person name="Kere J."/>
        </authorList>
    </citation>
    <scope>VARIANTS DIAR1 SER-120; LEU-124; ARG-131 AND ARG-496</scope>
</reference>
<reference key="11">
    <citation type="journal article" date="1998" name="Hum. Mutat.">
        <title>Clustering of private mutations in the congenital chloride diarrhea/down-regulated in adenoma gene.</title>
        <authorList>
            <person name="Hoeglund P."/>
            <person name="Haila S."/>
            <person name="Gustavson K.-H."/>
            <person name="Taipale M."/>
            <person name="Hannula K."/>
            <person name="Popinska K."/>
            <person name="Holmberg C."/>
            <person name="Socha J."/>
            <person name="de la Chapelle A."/>
            <person name="Kere J."/>
        </authorList>
    </citation>
    <scope>VARIANTS DIAR1 SER-120; ARG-131; VAL-318 DEL AND TYR-527 DEL</scope>
</reference>
<reference key="12">
    <citation type="journal article" date="2001" name="Hum. Mutat.">
        <title>Identification of seven novel mutations including the first two genomic rearrangements in SLC26A3 mutated in congenital chloride diarrhea.</title>
        <authorList>
            <person name="Hoeglund P."/>
            <person name="Sormaala M."/>
            <person name="Haila S."/>
            <person name="Socha J."/>
            <person name="Rajaram U."/>
            <person name="Scheurlen W."/>
            <person name="Sinaasappel M."/>
            <person name="de Jonge H."/>
            <person name="Holmberg C."/>
            <person name="Yoshikawa H."/>
            <person name="Kere J."/>
        </authorList>
    </citation>
    <scope>VARIANTS DIAR1 PRO-206 AND VAL-468</scope>
</reference>
<reference key="13">
    <citation type="journal article" date="2009" name="Proc. Natl. Acad. Sci. U.S.A.">
        <title>Genetic diagnosis by whole exome capture and massively parallel DNA sequencing.</title>
        <authorList>
            <person name="Choi M."/>
            <person name="Scholl U.I."/>
            <person name="Ji W."/>
            <person name="Liu T."/>
            <person name="Tikhonova I.R."/>
            <person name="Zumbo P."/>
            <person name="Nayir A."/>
            <person name="Bakkaloglu A."/>
            <person name="Ozen S."/>
            <person name="Sanjad S."/>
            <person name="Nelson-Williams C."/>
            <person name="Farhi A."/>
            <person name="Mane S."/>
            <person name="Lifton R.P."/>
        </authorList>
    </citation>
    <scope>VARIANTS DIAR1 CYS-520 AND ASN-652</scope>
</reference>
<reference key="14">
    <citation type="journal article" date="2011" name="Hum. Mutat.">
        <title>Update on SLC26A3 mutations in congenital chloride diarrhea.</title>
        <authorList>
            <person name="Wedenoja S."/>
            <person name="Pekansaari E."/>
            <person name="Hoglund P."/>
            <person name="Makela S."/>
            <person name="Holmberg C."/>
            <person name="Kere J."/>
        </authorList>
    </citation>
    <scope>VARIANTS DIAR1 LEU-129; LEU-131; ILE-136; ASP-204; PRO-220; TYR-343; 344-PHE--VAL-349 DELINS ASP-ALA; ALA-379; PHE-398; ASN-521 AND ASN-544</scope>
</reference>
<reference key="15">
    <citation type="journal article" date="2011" name="J. Pediatr. Gastroenterol. Nutr.">
        <title>Compound heterozygous mutations in the SLC26A3 gene in 2 Spanish siblings with congenital chloride diarrhea.</title>
        <authorList>
            <person name="Rodriguez-Herrera A."/>
            <person name="Navas-Lopez V.M."/>
            <person name="Redondo-Nevado J."/>
            <person name="Gutierrez G."/>
        </authorList>
    </citation>
    <scope>VARIANT DIAR1 PRO-220</scope>
</reference>
<reference key="16">
    <citation type="journal article" date="2012" name="Ann. Lab. Med.">
        <title>Identification of SLC26A3 mutations in a Korean patient with congenital chloride diarrhea.</title>
        <authorList>
            <person name="Lee E.S."/>
            <person name="Cho A.R."/>
            <person name="Ki C.S."/>
        </authorList>
    </citation>
    <scope>VARIANT DIAR1 SER-175</scope>
</reference>
<reference key="17">
    <citation type="journal article" date="2013" name="Eur. J. Pediatr.">
        <title>Congenital chloride diarrhea in Korean children: novel mutations and genetic characteristics.</title>
        <authorList>
            <person name="Hong J."/>
            <person name="Seo J.K."/>
            <person name="Ko J.S."/>
            <person name="Cheong H.I."/>
            <person name="Choi J.H."/>
            <person name="Lee J.H."/>
            <person name="Seo J.W."/>
        </authorList>
    </citation>
    <scope>VARIANTS DIAR1 LEU-131 AND ASN-134</scope>
</reference>
<reference key="18">
    <citation type="journal article" date="2017" name="J. Pediatr. Gastroenterol. Nutr.">
        <title>Twelve novel mutations in the SLC26A3 gene in 17 sporadic cases of congenital chloride diarrhea.</title>
        <authorList>
            <person name="Amato F."/>
            <person name="Cardillo G."/>
            <person name="Liguori R."/>
            <person name="Scorza M."/>
            <person name="Comegna M."/>
            <person name="Elce A."/>
            <person name="Giordano S."/>
            <person name="Lucaccioni L."/>
            <person name="Lugli L."/>
            <person name="Cardile S."/>
            <person name="Romano C."/>
            <person name="Pezzella V."/>
            <person name="Castaldo G."/>
            <person name="Canani R.B."/>
        </authorList>
    </citation>
    <scope>VARIANTS DIAR1 SER-120; LEU-129; ARG-131; VAL-318 DEL; ILE-394; PRO-438; PRO-495; ARG-508; GLU-547; PRO-654 AND ILE-675 INS</scope>
</reference>
<organism>
    <name type="scientific">Homo sapiens</name>
    <name type="common">Human</name>
    <dbReference type="NCBI Taxonomy" id="9606"/>
    <lineage>
        <taxon>Eukaryota</taxon>
        <taxon>Metazoa</taxon>
        <taxon>Chordata</taxon>
        <taxon>Craniata</taxon>
        <taxon>Vertebrata</taxon>
        <taxon>Euteleostomi</taxon>
        <taxon>Mammalia</taxon>
        <taxon>Eutheria</taxon>
        <taxon>Euarchontoglires</taxon>
        <taxon>Primates</taxon>
        <taxon>Haplorrhini</taxon>
        <taxon>Catarrhini</taxon>
        <taxon>Hominidae</taxon>
        <taxon>Homo</taxon>
    </lineage>
</organism>
<keyword id="KW-0002">3D-structure</keyword>
<keyword id="KW-0050">Antiport</keyword>
<keyword id="KW-1003">Cell membrane</keyword>
<keyword id="KW-0868">Chloride</keyword>
<keyword id="KW-0225">Disease variant</keyword>
<keyword id="KW-0325">Glycoprotein</keyword>
<keyword id="KW-0472">Membrane</keyword>
<keyword id="KW-1267">Proteomics identification</keyword>
<keyword id="KW-1185">Reference proteome</keyword>
<keyword id="KW-0812">Transmembrane</keyword>
<keyword id="KW-1133">Transmembrane helix</keyword>
<keyword id="KW-0813">Transport</keyword>
<sequence>MIEPFGNQYIVARPVYSTNAFEENHKKTGRHHKTFLDHLKVCCSCSPQKAKRIVLSLFPIASWLPAYRLKEWLLSDIVSGISTGIVAVLQGLAFALLVDIPPVYGLYASFFPAIIYLFFGTSRHISVGPFPILSMMVGLAVSGAVSKAVPDRNATTLGLPNNSNNSSLLDDERVRVAAAASVTVLSGIIQLAFGILRIGFVVIYLSESLISGFTTAAAVHVLVSQLKFIFQLTVPSHTDPVSIFKVLYSVFSQIEKTNIADLVTALIVLLVVSIVKEINQRFKDKLPVPIPIEFIMTVIAAGVSYGCDFKNRFKVAVVGDMNPGFQPPITPDVETFQNTVGDCFGIAMVAFAVAFSVASVYSLKYDYPLDGNQELIALGLGNIVCGVFRGFAGSTALSRSAVQESTGGKTQIAGLIGAIIVLIVVLAIGFLLAPLQKSVLAALALGNLKGMLMQFAEIGRLWRKDKYDCLIWIMTFIFTIVLGLGLGLAASVAFQLLTIVFRTQFPKCSTLANIGRTNIYKNKKDYYDMYEPEGVKIFRCPSPIYFANIGFFRRKLIDAVGFSPLRILRKRNKALRKIRKLQKQGLLQVTPKGFICTVDTIKDSDEELDNNQIEVLDQPINTTDLPFHIDWNDDLPLNIEVPKISLHSLILDFSAVSFLDVSSVRGLKSILQEFIRIKVDVYIVGTDDDFIEKLNRYEFFDGEVKSSIFFLTIHDAVLHILMKKDYSTSKFNPSQEKDGKIDFTINTNGGLRNRVYEVPVETKF</sequence>
<evidence type="ECO:0000250" key="1">
    <source>
        <dbReference type="UniProtKB" id="Q9WVC8"/>
    </source>
</evidence>
<evidence type="ECO:0000255" key="2"/>
<evidence type="ECO:0000255" key="3">
    <source>
        <dbReference type="PROSITE-ProRule" id="PRU00198"/>
    </source>
</evidence>
<evidence type="ECO:0000269" key="4">
    <source>
    </source>
</evidence>
<evidence type="ECO:0000269" key="5">
    <source>
    </source>
</evidence>
<evidence type="ECO:0000269" key="6">
    <source>
    </source>
</evidence>
<evidence type="ECO:0000269" key="7">
    <source>
    </source>
</evidence>
<evidence type="ECO:0000269" key="8">
    <source>
    </source>
</evidence>
<evidence type="ECO:0000269" key="9">
    <source>
    </source>
</evidence>
<evidence type="ECO:0000269" key="10">
    <source>
    </source>
</evidence>
<evidence type="ECO:0000269" key="11">
    <source>
    </source>
</evidence>
<evidence type="ECO:0000269" key="12">
    <source>
    </source>
</evidence>
<evidence type="ECO:0000269" key="13">
    <source>
    </source>
</evidence>
<evidence type="ECO:0000269" key="14">
    <source>
    </source>
</evidence>
<evidence type="ECO:0000269" key="15">
    <source>
    </source>
</evidence>
<evidence type="ECO:0000269" key="16">
    <source>
    </source>
</evidence>
<evidence type="ECO:0000269" key="17">
    <source>
    </source>
</evidence>
<evidence type="ECO:0000269" key="18">
    <source>
    </source>
</evidence>
<evidence type="ECO:0000269" key="19">
    <source>
    </source>
</evidence>
<evidence type="ECO:0000305" key="20"/>
<evidence type="ECO:0007829" key="21">
    <source>
        <dbReference type="PDB" id="7XUH"/>
    </source>
</evidence>
<evidence type="ECO:0007829" key="22">
    <source>
        <dbReference type="PDB" id="7XUJ"/>
    </source>
</evidence>
<evidence type="ECO:0007829" key="23">
    <source>
        <dbReference type="PDB" id="7XUL"/>
    </source>
</evidence>
<comment type="function">
    <text evidence="1 6 7 11 12">Mediates chloride-bicarbonate exchange with a chloride bicarbonate stoichiometry of 2:1 in the intestinal epithelia (PubMed:16606687, PubMed:19321737, PubMed:22159084, PubMed:22627094). Plays a role in the chloride and bicarbonate homeostasis during sperm epididymal maturation and capacitation (By similarity).</text>
</comment>
<comment type="catalytic activity">
    <reaction evidence="6 7 11 12">
        <text>hydrogencarbonate(in) + 2 chloride(out) = hydrogencarbonate(out) + 2 chloride(in)</text>
        <dbReference type="Rhea" id="RHEA:72203"/>
        <dbReference type="ChEBI" id="CHEBI:17544"/>
        <dbReference type="ChEBI" id="CHEBI:17996"/>
    </reaction>
</comment>
<comment type="activity regulation">
    <text evidence="7">Inhibited by acidic pH.</text>
</comment>
<comment type="subunit">
    <text evidence="1 5 12">Interacts with CFTR, SLC26A6 and NHERF1 (By similarity). Interacts with PDZK1 (PubMed:15766278). Interacts (via PDZ-binding motif) with NHERF4 (via the third PDZ domain); interaction leads to decreased expression of SLC26A3 on the cell membrane resulting in its reduced exchanger activity (PubMed:22627094).</text>
</comment>
<comment type="interaction">
    <interactant intactId="EBI-8542350">
        <id>P40879</id>
    </interactant>
    <interactant intactId="EBI-1149760">
        <id>Q15599</id>
        <label>NHERF2</label>
    </interactant>
    <organismsDiffer>false</organismsDiffer>
    <experiments>5</experiments>
</comment>
<comment type="subcellular location">
    <subcellularLocation>
        <location evidence="11">Apical cell membrane</location>
        <topology evidence="2">Multi-pass membrane protein</topology>
    </subcellularLocation>
    <subcellularLocation>
        <location evidence="1">Membrane</location>
        <topology evidence="2">Multi-pass membrane protein</topology>
    </subcellularLocation>
    <subcellularLocation>
        <location evidence="7 12">Cell membrane</location>
        <topology evidence="2">Multi-pass membrane protein</topology>
    </subcellularLocation>
    <text evidence="1">Localized in sperm membranes. Midpiece of sperm tail. Colocalizes with CFTR at the midpiece of sperm tail (By similarity).</text>
</comment>
<comment type="tissue specificity">
    <text evidence="16">Expressed in the colon. Expression is significantly decreased in adenomas (polyps) and adenocarcinomas of the colon.</text>
</comment>
<comment type="PTM">
    <text evidence="11">N-glycosylation is required for efficient cell surface expression, and protection from proteolytic degradation.</text>
</comment>
<comment type="disease" evidence="4 8 9 10 13 14 15 17 18 19">
    <disease id="DI-01395">
        <name>Diarrhea 1, secretory chloride, congenital</name>
        <acronym>DIAR1</acronym>
        <description>A disease characterized by voluminous watery stools containing an excess of chloride. The children with this disease are often premature.</description>
        <dbReference type="MIM" id="214700"/>
    </disease>
    <text>The disease is caused by variants affecting the gene represented in this entry.</text>
</comment>
<comment type="similarity">
    <text evidence="20">Belongs to the SLC26A/SulP transporter (TC 2.A.53) family.</text>
</comment>
<protein>
    <recommendedName>
        <fullName>Chloride anion exchanger</fullName>
    </recommendedName>
    <alternativeName>
        <fullName>Down-regulated in adenoma</fullName>
        <shortName>Protein DRA</shortName>
    </alternativeName>
    <alternativeName>
        <fullName>Solute carrier family 26 member 3</fullName>
    </alternativeName>
</protein>
<feature type="chain" id="PRO_0000080161" description="Chloride anion exchanger">
    <location>
        <begin position="1"/>
        <end position="764"/>
    </location>
</feature>
<feature type="topological domain" description="Cytoplasmic" evidence="20">
    <location>
        <begin position="1"/>
        <end position="76"/>
    </location>
</feature>
<feature type="transmembrane region" description="Helical" evidence="2">
    <location>
        <begin position="77"/>
        <end position="97"/>
    </location>
</feature>
<feature type="topological domain" description="Extracellular" evidence="20">
    <location>
        <begin position="98"/>
        <end position="99"/>
    </location>
</feature>
<feature type="transmembrane region" description="Helical" evidence="2">
    <location>
        <begin position="100"/>
        <end position="120"/>
    </location>
</feature>
<feature type="topological domain" description="Cytoplasmic" evidence="20">
    <location>
        <begin position="121"/>
        <end position="124"/>
    </location>
</feature>
<feature type="transmembrane region" description="Helical" evidence="2">
    <location>
        <begin position="125"/>
        <end position="145"/>
    </location>
</feature>
<feature type="topological domain" description="Extracellular" evidence="20">
    <location>
        <begin position="146"/>
        <end position="175"/>
    </location>
</feature>
<feature type="transmembrane region" description="Helical" evidence="2">
    <location>
        <begin position="176"/>
        <end position="196"/>
    </location>
</feature>
<feature type="topological domain" description="Cytoplasmic" evidence="20">
    <location>
        <position position="197"/>
    </location>
</feature>
<feature type="transmembrane region" description="Helical" evidence="2">
    <location>
        <begin position="198"/>
        <end position="218"/>
    </location>
</feature>
<feature type="topological domain" description="Extracellular" evidence="20">
    <location>
        <begin position="219"/>
        <end position="257"/>
    </location>
</feature>
<feature type="transmembrane region" description="Helical" evidence="2">
    <location>
        <begin position="258"/>
        <end position="278"/>
    </location>
</feature>
<feature type="topological domain" description="Cytoplasmic" evidence="20">
    <location>
        <begin position="279"/>
        <end position="342"/>
    </location>
</feature>
<feature type="transmembrane region" description="Helical" evidence="2">
    <location>
        <begin position="343"/>
        <end position="363"/>
    </location>
</feature>
<feature type="topological domain" description="Extracellular" evidence="20">
    <location>
        <begin position="364"/>
        <end position="374"/>
    </location>
</feature>
<feature type="transmembrane region" description="Helical" evidence="2">
    <location>
        <begin position="375"/>
        <end position="395"/>
    </location>
</feature>
<feature type="topological domain" description="Cytoplasmic" evidence="20">
    <location>
        <begin position="396"/>
        <end position="411"/>
    </location>
</feature>
<feature type="transmembrane region" description="Helical" evidence="2">
    <location>
        <begin position="412"/>
        <end position="432"/>
    </location>
</feature>
<feature type="topological domain" description="Extracellular" evidence="20">
    <location>
        <begin position="433"/>
        <end position="469"/>
    </location>
</feature>
<feature type="transmembrane region" description="Helical" evidence="2">
    <location>
        <begin position="470"/>
        <end position="490"/>
    </location>
</feature>
<feature type="topological domain" description="Cytoplasmic" evidence="20">
    <location>
        <begin position="491"/>
        <end position="701"/>
    </location>
</feature>
<feature type="domain" description="STAS" evidence="3">
    <location>
        <begin position="525"/>
        <end position="720"/>
    </location>
</feature>
<feature type="short sequence motif" description="PDZ-binding" evidence="12">
    <location>
        <begin position="761"/>
        <end position="764"/>
    </location>
</feature>
<feature type="glycosylation site" description="N-linked (GlcNAc...) asparagine" evidence="11">
    <location>
        <position position="153"/>
    </location>
</feature>
<feature type="glycosylation site" description="N-linked (GlcNAc...) asparagine" evidence="11">
    <location>
        <position position="161"/>
    </location>
</feature>
<feature type="glycosylation site" description="N-linked (GlcNAc...) asparagine" evidence="11">
    <location>
        <position position="165"/>
    </location>
</feature>
<feature type="sequence variant" id="VAR_053660" description="In dbSNP:rs10280704.">
    <original>R</original>
    <variation>Q</variation>
    <location>
        <position position="68"/>
    </location>
</feature>
<feature type="sequence variant" id="VAR_007428" description="In DIAR1; dbSNP:rs386833479." evidence="15 18 19">
    <original>G</original>
    <variation>S</variation>
    <location>
        <position position="120"/>
    </location>
</feature>
<feature type="sequence variant" id="VAR_007429" description="In DIAR1; dbSNP:rs121913030." evidence="17 19">
    <original>H</original>
    <variation>L</variation>
    <location>
        <position position="124"/>
    </location>
</feature>
<feature type="sequence variant" id="VAR_066062" description="In DIAR1; dbSNP:rs386833480." evidence="10 15">
    <original>P</original>
    <variation>L</variation>
    <location>
        <position position="129"/>
    </location>
</feature>
<feature type="sequence variant" id="VAR_066063" description="In DIAR1; dbSNP:rs386833481." evidence="10 14">
    <original>P</original>
    <variation>L</variation>
    <location>
        <position position="131"/>
    </location>
</feature>
<feature type="sequence variant" id="VAR_007430" description="In DIAR1; dbSNP:rs386833481." evidence="15 18 19">
    <original>P</original>
    <variation>R</variation>
    <location>
        <position position="131"/>
    </location>
</feature>
<feature type="sequence variant" id="VAR_077354" description="In DIAR1." evidence="14">
    <original>S</original>
    <variation>N</variation>
    <location>
        <position position="134"/>
    </location>
</feature>
<feature type="sequence variant" id="VAR_066064" description="In DIAR1; dbSNP:rs386833483." evidence="10">
    <original>M</original>
    <variation>I</variation>
    <location>
        <position position="136"/>
    </location>
</feature>
<feature type="sequence variant" id="VAR_077355" description="In DIAR1; dbSNP:rs386833484." evidence="13">
    <original>R</original>
    <variation>S</variation>
    <location>
        <position position="175"/>
    </location>
</feature>
<feature type="sequence variant" id="VAR_066065" description="In DIAR1; dbSNP:rs386833487." evidence="10">
    <original>Y</original>
    <variation>D</variation>
    <location>
        <position position="204"/>
    </location>
</feature>
<feature type="sequence variant" id="VAR_012777" description="In DIAR1; dbSNP:rs386833488." evidence="4">
    <original>S</original>
    <variation>P</variation>
    <location>
        <position position="206"/>
    </location>
</feature>
<feature type="sequence variant" id="VAR_066066" description="In DIAR1; dbSNP:rs386833489." evidence="9 10">
    <original>H</original>
    <variation>P</variation>
    <location>
        <position position="220"/>
    </location>
</feature>
<feature type="sequence variant" id="VAR_007431" description="In dbSNP:rs34407351." evidence="17">
    <original>C</original>
    <variation>W</variation>
    <location>
        <position position="307"/>
    </location>
</feature>
<feature type="sequence variant" id="VAR_007432" description="In DIAR1; dbSNP:rs386833491." evidence="15 17 18">
    <location>
        <position position="318"/>
    </location>
</feature>
<feature type="sequence variant" id="VAR_066067" description="In DIAR1; dbSNP:rs386833444." evidence="10">
    <original>C</original>
    <variation>Y</variation>
    <location>
        <position position="343"/>
    </location>
</feature>
<feature type="sequence variant" id="VAR_066068" description="In DIAR1." evidence="10">
    <original>FGIAMV</original>
    <variation>DA</variation>
    <location>
        <begin position="344"/>
        <end position="349"/>
    </location>
</feature>
<feature type="sequence variant" id="VAR_066069" description="In DIAR1; dbSNP:rs386833446." evidence="10">
    <original>G</original>
    <variation>A</variation>
    <location>
        <position position="379"/>
    </location>
</feature>
<feature type="sequence variant" id="VAR_077356" description="In DIAR1; dbSNP:rs1228273365." evidence="15">
    <original>S</original>
    <variation>I</variation>
    <location>
        <position position="394"/>
    </location>
</feature>
<feature type="sequence variant" id="VAR_066070" description="In DIAR1; dbSNP:rs143839547." evidence="10">
    <original>S</original>
    <variation>F</variation>
    <location>
        <position position="398"/>
    </location>
</feature>
<feature type="sequence variant" id="VAR_077357" description="In DIAR1; dbSNP:rs763669046." evidence="15">
    <original>S</original>
    <variation>P</variation>
    <location>
        <position position="438"/>
    </location>
</feature>
<feature type="sequence variant" id="VAR_012778" description="In DIAR1; dbSNP:rs386833454." evidence="4">
    <original>D</original>
    <variation>V</variation>
    <location>
        <position position="468"/>
    </location>
</feature>
<feature type="sequence variant" id="VAR_077358" description="In DIAR1." evidence="15">
    <original>Q</original>
    <variation>P</variation>
    <location>
        <position position="495"/>
    </location>
</feature>
<feature type="sequence variant" id="VAR_066071" description="In DIAR1; dbSNP:rs386833457." evidence="19">
    <original>L</original>
    <variation>R</variation>
    <location>
        <position position="496"/>
    </location>
</feature>
<feature type="sequence variant" id="VAR_077359" description="In DIAR1." evidence="15">
    <original>C</original>
    <variation>R</variation>
    <location>
        <position position="508"/>
    </location>
</feature>
<feature type="sequence variant" id="VAR_066072" description="In DIAR1; dbSNP:rs386833462." evidence="8">
    <original>Y</original>
    <variation>C</variation>
    <location>
        <position position="520"/>
    </location>
</feature>
<feature type="sequence variant" id="VAR_066073" description="In DIAR1; dbSNP:rs386833463." evidence="10">
    <original>K</original>
    <variation>N</variation>
    <location>
        <position position="521"/>
    </location>
</feature>
<feature type="sequence variant" id="VAR_007433" description="In DIAR1; dbSNP:rs386833464." evidence="18">
    <location>
        <position position="527"/>
    </location>
</feature>
<feature type="sequence variant" id="VAR_066074" description="In DIAR1; dbSNP:rs386833467." evidence="10">
    <original>I</original>
    <variation>N</variation>
    <location>
        <position position="544"/>
    </location>
</feature>
<feature type="sequence variant" id="VAR_077360" description="In DIAR1." evidence="15">
    <original>A</original>
    <variation>E</variation>
    <location>
        <position position="547"/>
    </location>
</feature>
<feature type="sequence variant" id="VAR_053661" description="In dbSNP:rs2301635.">
    <original>R</original>
    <variation>Q</variation>
    <location>
        <position position="554"/>
    </location>
</feature>
<feature type="sequence variant" id="VAR_066075" description="In DIAR1; dbSNP:rs140426439." evidence="8">
    <original>D</original>
    <variation>N</variation>
    <location>
        <position position="652"/>
    </location>
</feature>
<feature type="sequence variant" id="VAR_077361" description="In DIAR1." evidence="15">
    <original>S</original>
    <variation>P</variation>
    <location>
        <position position="654"/>
    </location>
</feature>
<feature type="sequence variant" id="VAR_077362" description="In DIAR1; dbSNP:rs121913031." evidence="15">
    <original>I</original>
    <variation>II</variation>
    <location>
        <position position="675"/>
    </location>
</feature>
<feature type="sequence variant" id="VAR_053662" description="In dbSNP:rs35342296.">
    <original>N</original>
    <variation>S</variation>
    <location>
        <position position="753"/>
    </location>
</feature>
<feature type="mutagenesis site" description="Loss of interaction with NHERF4. No effect on localization to cell membrane or its exchanger activity." evidence="12">
    <location>
        <begin position="761"/>
        <end position="764"/>
    </location>
</feature>
<feature type="strand" evidence="21">
    <location>
        <begin position="9"/>
        <end position="13"/>
    </location>
</feature>
<feature type="helix" evidence="21">
    <location>
        <begin position="20"/>
        <end position="24"/>
    </location>
</feature>
<feature type="helix" evidence="21">
    <location>
        <begin position="35"/>
        <end position="42"/>
    </location>
</feature>
<feature type="turn" evidence="21">
    <location>
        <begin position="47"/>
        <end position="49"/>
    </location>
</feature>
<feature type="helix" evidence="21">
    <location>
        <begin position="50"/>
        <end position="57"/>
    </location>
</feature>
<feature type="helix" evidence="21">
    <location>
        <begin position="60"/>
        <end position="63"/>
    </location>
</feature>
<feature type="strand" evidence="23">
    <location>
        <begin position="64"/>
        <end position="66"/>
    </location>
</feature>
<feature type="helix" evidence="21">
    <location>
        <begin position="69"/>
        <end position="94"/>
    </location>
</feature>
<feature type="turn" evidence="21">
    <location>
        <begin position="95"/>
        <end position="99"/>
    </location>
</feature>
<feature type="helix" evidence="21">
    <location>
        <begin position="102"/>
        <end position="105"/>
    </location>
</feature>
<feature type="turn" evidence="21">
    <location>
        <begin position="106"/>
        <end position="110"/>
    </location>
</feature>
<feature type="helix" evidence="21">
    <location>
        <begin position="111"/>
        <end position="119"/>
    </location>
</feature>
<feature type="helix" evidence="21">
    <location>
        <begin position="131"/>
        <end position="144"/>
    </location>
</feature>
<feature type="turn" evidence="21">
    <location>
        <begin position="168"/>
        <end position="170"/>
    </location>
</feature>
<feature type="helix" evidence="21">
    <location>
        <begin position="171"/>
        <end position="195"/>
    </location>
</feature>
<feature type="helix" evidence="21">
    <location>
        <begin position="201"/>
        <end position="204"/>
    </location>
</feature>
<feature type="helix" evidence="21">
    <location>
        <begin position="207"/>
        <end position="224"/>
    </location>
</feature>
<feature type="helix" evidence="21">
    <location>
        <begin position="226"/>
        <end position="229"/>
    </location>
</feature>
<feature type="strand" evidence="21">
    <location>
        <begin position="239"/>
        <end position="241"/>
    </location>
</feature>
<feature type="helix" evidence="21">
    <location>
        <begin position="242"/>
        <end position="251"/>
    </location>
</feature>
<feature type="helix" evidence="21">
    <location>
        <begin position="252"/>
        <end position="256"/>
    </location>
</feature>
<feature type="helix" evidence="21">
    <location>
        <begin position="259"/>
        <end position="275"/>
    </location>
</feature>
<feature type="helix" evidence="21">
    <location>
        <begin position="278"/>
        <end position="281"/>
    </location>
</feature>
<feature type="strand" evidence="21">
    <location>
        <begin position="283"/>
        <end position="285"/>
    </location>
</feature>
<feature type="helix" evidence="21">
    <location>
        <begin position="292"/>
        <end position="304"/>
    </location>
</feature>
<feature type="turn" evidence="21">
    <location>
        <begin position="305"/>
        <end position="308"/>
    </location>
</feature>
<feature type="helix" evidence="21">
    <location>
        <begin position="309"/>
        <end position="312"/>
    </location>
</feature>
<feature type="helix" evidence="21">
    <location>
        <begin position="333"/>
        <end position="337"/>
    </location>
</feature>
<feature type="helix" evidence="21">
    <location>
        <begin position="340"/>
        <end position="365"/>
    </location>
</feature>
<feature type="helix" evidence="21">
    <location>
        <begin position="371"/>
        <end position="387"/>
    </location>
</feature>
<feature type="helix" evidence="21">
    <location>
        <begin position="397"/>
        <end position="405"/>
    </location>
</feature>
<feature type="helix" evidence="21">
    <location>
        <begin position="412"/>
        <end position="426"/>
    </location>
</feature>
<feature type="turn" evidence="21">
    <location>
        <begin position="429"/>
        <end position="432"/>
    </location>
</feature>
<feature type="helix" evidence="21">
    <location>
        <begin position="439"/>
        <end position="444"/>
    </location>
</feature>
<feature type="turn" evidence="21">
    <location>
        <begin position="445"/>
        <end position="447"/>
    </location>
</feature>
<feature type="helix" evidence="21">
    <location>
        <begin position="449"/>
        <end position="452"/>
    </location>
</feature>
<feature type="helix" evidence="21">
    <location>
        <begin position="453"/>
        <end position="455"/>
    </location>
</feature>
<feature type="helix" evidence="21">
    <location>
        <begin position="458"/>
        <end position="462"/>
    </location>
</feature>
<feature type="turn" evidence="21">
    <location>
        <begin position="463"/>
        <end position="465"/>
    </location>
</feature>
<feature type="helix" evidence="21">
    <location>
        <begin position="468"/>
        <end position="482"/>
    </location>
</feature>
<feature type="helix" evidence="21">
    <location>
        <begin position="484"/>
        <end position="502"/>
    </location>
</feature>
<feature type="strand" evidence="21">
    <location>
        <begin position="509"/>
        <end position="518"/>
    </location>
</feature>
<feature type="strand" evidence="21">
    <location>
        <begin position="520"/>
        <end position="522"/>
    </location>
</feature>
<feature type="turn" evidence="21">
    <location>
        <begin position="523"/>
        <end position="525"/>
    </location>
</feature>
<feature type="strand" evidence="21">
    <location>
        <begin position="526"/>
        <end position="528"/>
    </location>
</feature>
<feature type="strand" evidence="21">
    <location>
        <begin position="535"/>
        <end position="539"/>
    </location>
</feature>
<feature type="turn" evidence="21">
    <location>
        <begin position="546"/>
        <end position="548"/>
    </location>
</feature>
<feature type="helix" evidence="21">
    <location>
        <begin position="549"/>
        <end position="559"/>
    </location>
</feature>
<feature type="strand" evidence="21">
    <location>
        <begin position="560"/>
        <end position="562"/>
    </location>
</feature>
<feature type="helix" evidence="21">
    <location>
        <begin position="564"/>
        <end position="582"/>
    </location>
</feature>
<feature type="turn" evidence="21">
    <location>
        <begin position="583"/>
        <end position="585"/>
    </location>
</feature>
<feature type="strand" evidence="22">
    <location>
        <begin position="591"/>
        <end position="594"/>
    </location>
</feature>
<feature type="strand" evidence="23">
    <location>
        <begin position="597"/>
        <end position="599"/>
    </location>
</feature>
<feature type="turn" evidence="21">
    <location>
        <begin position="610"/>
        <end position="612"/>
    </location>
</feature>
<feature type="helix" evidence="21">
    <location>
        <begin position="613"/>
        <end position="615"/>
    </location>
</feature>
<feature type="strand" evidence="21">
    <location>
        <begin position="625"/>
        <end position="627"/>
    </location>
</feature>
<feature type="strand" evidence="21">
    <location>
        <begin position="631"/>
        <end position="633"/>
    </location>
</feature>
<feature type="strand" evidence="21">
    <location>
        <begin position="636"/>
        <end position="638"/>
    </location>
</feature>
<feature type="strand" evidence="21">
    <location>
        <begin position="648"/>
        <end position="652"/>
    </location>
</feature>
<feature type="helix" evidence="21">
    <location>
        <begin position="661"/>
        <end position="676"/>
    </location>
</feature>
<feature type="strand" evidence="21">
    <location>
        <begin position="680"/>
        <end position="685"/>
    </location>
</feature>
<feature type="helix" evidence="21">
    <location>
        <begin position="688"/>
        <end position="694"/>
    </location>
</feature>
<feature type="turn" evidence="21">
    <location>
        <begin position="695"/>
        <end position="698"/>
    </location>
</feature>
<feature type="strand" evidence="21">
    <location>
        <begin position="702"/>
        <end position="704"/>
    </location>
</feature>
<feature type="helix" evidence="22">
    <location>
        <begin position="706"/>
        <end position="708"/>
    </location>
</feature>
<feature type="strand" evidence="21">
    <location>
        <begin position="709"/>
        <end position="712"/>
    </location>
</feature>
<feature type="helix" evidence="21">
    <location>
        <begin position="713"/>
        <end position="723"/>
    </location>
</feature>
<dbReference type="EMBL" id="L02785">
    <property type="protein sequence ID" value="AAA58443.1"/>
    <property type="molecule type" value="mRNA"/>
</dbReference>
<dbReference type="EMBL" id="BC025671">
    <property type="protein sequence ID" value="AAH25671.1"/>
    <property type="molecule type" value="mRNA"/>
</dbReference>
<dbReference type="CCDS" id="CCDS5748.1"/>
<dbReference type="PIR" id="A47456">
    <property type="entry name" value="A47456"/>
</dbReference>
<dbReference type="RefSeq" id="NP_000102.1">
    <property type="nucleotide sequence ID" value="NM_000111.3"/>
</dbReference>
<dbReference type="RefSeq" id="XP_011514169.1">
    <property type="nucleotide sequence ID" value="XM_011515867.2"/>
</dbReference>
<dbReference type="PDB" id="7XUH">
    <property type="method" value="EM"/>
    <property type="resolution" value="2.76 A"/>
    <property type="chains" value="A/B=1-764"/>
</dbReference>
<dbReference type="PDB" id="7XUJ">
    <property type="method" value="EM"/>
    <property type="resolution" value="2.80 A"/>
    <property type="chains" value="A/B=8-725"/>
</dbReference>
<dbReference type="PDB" id="7XUL">
    <property type="method" value="EM"/>
    <property type="resolution" value="3.16 A"/>
    <property type="chains" value="A/B=8-725"/>
</dbReference>
<dbReference type="PDB" id="8IET">
    <property type="method" value="EM"/>
    <property type="resolution" value="3.50 A"/>
    <property type="chains" value="A/B=1-764"/>
</dbReference>
<dbReference type="PDBsum" id="7XUH"/>
<dbReference type="PDBsum" id="7XUJ"/>
<dbReference type="PDBsum" id="7XUL"/>
<dbReference type="PDBsum" id="8IET"/>
<dbReference type="EMDB" id="EMD-33469"/>
<dbReference type="EMDB" id="EMD-33471"/>
<dbReference type="EMDB" id="EMD-33473"/>
<dbReference type="EMDB" id="EMD-35393"/>
<dbReference type="SMR" id="P40879"/>
<dbReference type="BioGRID" id="108145">
    <property type="interactions" value="1"/>
</dbReference>
<dbReference type="FunCoup" id="P40879">
    <property type="interactions" value="94"/>
</dbReference>
<dbReference type="IntAct" id="P40879">
    <property type="interactions" value="2"/>
</dbReference>
<dbReference type="MINT" id="P40879"/>
<dbReference type="STRING" id="9606.ENSP00000345873"/>
<dbReference type="ChEMBL" id="CHEMBL4523223"/>
<dbReference type="DrugBank" id="DB01586">
    <property type="generic name" value="Ursodeoxycholic acid"/>
</dbReference>
<dbReference type="TCDB" id="2.A.53.2.18">
    <property type="family name" value="the sulfate permease (sulp) family"/>
</dbReference>
<dbReference type="GlyCosmos" id="P40879">
    <property type="glycosylation" value="3 sites, No reported glycans"/>
</dbReference>
<dbReference type="GlyGen" id="P40879">
    <property type="glycosylation" value="3 sites"/>
</dbReference>
<dbReference type="iPTMnet" id="P40879"/>
<dbReference type="PhosphoSitePlus" id="P40879"/>
<dbReference type="BioMuta" id="SLC26A3"/>
<dbReference type="DMDM" id="729367"/>
<dbReference type="jPOST" id="P40879"/>
<dbReference type="MassIVE" id="P40879"/>
<dbReference type="PaxDb" id="9606-ENSP00000345873"/>
<dbReference type="PeptideAtlas" id="P40879"/>
<dbReference type="ProteomicsDB" id="55383"/>
<dbReference type="Antibodypedia" id="31383">
    <property type="antibodies" value="98 antibodies from 27 providers"/>
</dbReference>
<dbReference type="DNASU" id="1811"/>
<dbReference type="Ensembl" id="ENST00000340010.10">
    <property type="protein sequence ID" value="ENSP00000345873.5"/>
    <property type="gene ID" value="ENSG00000091138.13"/>
</dbReference>
<dbReference type="GeneID" id="1811"/>
<dbReference type="KEGG" id="hsa:1811"/>
<dbReference type="MANE-Select" id="ENST00000340010.10">
    <property type="protein sequence ID" value="ENSP00000345873.5"/>
    <property type="RefSeq nucleotide sequence ID" value="NM_000111.3"/>
    <property type="RefSeq protein sequence ID" value="NP_000102.1"/>
</dbReference>
<dbReference type="UCSC" id="uc003ver.3">
    <property type="organism name" value="human"/>
</dbReference>
<dbReference type="AGR" id="HGNC:3018"/>
<dbReference type="CTD" id="1811"/>
<dbReference type="DisGeNET" id="1811"/>
<dbReference type="GeneCards" id="SLC26A3"/>
<dbReference type="HGNC" id="HGNC:3018">
    <property type="gene designation" value="SLC26A3"/>
</dbReference>
<dbReference type="HPA" id="ENSG00000091138">
    <property type="expression patterns" value="Tissue enriched (intestine)"/>
</dbReference>
<dbReference type="MalaCards" id="SLC26A3"/>
<dbReference type="MIM" id="126650">
    <property type="type" value="gene"/>
</dbReference>
<dbReference type="MIM" id="214700">
    <property type="type" value="phenotype"/>
</dbReference>
<dbReference type="neXtProt" id="NX_P40879"/>
<dbReference type="OpenTargets" id="ENSG00000091138"/>
<dbReference type="Orphanet" id="53689">
    <property type="disease" value="Congenital chloride diarrhea"/>
</dbReference>
<dbReference type="PharmGKB" id="PA35044"/>
<dbReference type="VEuPathDB" id="HostDB:ENSG00000091138"/>
<dbReference type="eggNOG" id="KOG0236">
    <property type="taxonomic scope" value="Eukaryota"/>
</dbReference>
<dbReference type="GeneTree" id="ENSGT01070000253775"/>
<dbReference type="HOGENOM" id="CLU_003182_9_4_1"/>
<dbReference type="InParanoid" id="P40879"/>
<dbReference type="OMA" id="WVMTFIF"/>
<dbReference type="OrthoDB" id="288203at2759"/>
<dbReference type="PAN-GO" id="P40879">
    <property type="GO annotations" value="6 GO annotations based on evolutionary models"/>
</dbReference>
<dbReference type="PhylomeDB" id="P40879"/>
<dbReference type="TreeFam" id="TF313784"/>
<dbReference type="PathwayCommons" id="P40879"/>
<dbReference type="Reactome" id="R-HSA-427601">
    <property type="pathway name" value="Multifunctional anion exchangers"/>
</dbReference>
<dbReference type="Reactome" id="R-HSA-5619085">
    <property type="pathway name" value="Defective SLC26A3 causes congenital secretory chloride diarrhea 1 (DIAR1)"/>
</dbReference>
<dbReference type="SignaLink" id="P40879"/>
<dbReference type="SIGNOR" id="P40879"/>
<dbReference type="BioGRID-ORCS" id="1811">
    <property type="hits" value="10 hits in 1145 CRISPR screens"/>
</dbReference>
<dbReference type="ChiTaRS" id="SLC26A3">
    <property type="organism name" value="human"/>
</dbReference>
<dbReference type="GeneWiki" id="SLC26A3"/>
<dbReference type="GenomeRNAi" id="1811"/>
<dbReference type="Pharos" id="P40879">
    <property type="development level" value="Tbio"/>
</dbReference>
<dbReference type="PRO" id="PR:P40879"/>
<dbReference type="Proteomes" id="UP000005640">
    <property type="component" value="Chromosome 7"/>
</dbReference>
<dbReference type="RNAct" id="P40879">
    <property type="molecule type" value="protein"/>
</dbReference>
<dbReference type="Bgee" id="ENSG00000091138">
    <property type="expression patterns" value="Expressed in colonic mucosa and 111 other cell types or tissues"/>
</dbReference>
<dbReference type="ExpressionAtlas" id="P40879">
    <property type="expression patterns" value="baseline and differential"/>
</dbReference>
<dbReference type="GO" id="GO:0016324">
    <property type="term" value="C:apical plasma membrane"/>
    <property type="evidence" value="ECO:0007669"/>
    <property type="project" value="UniProtKB-SubCell"/>
</dbReference>
<dbReference type="GO" id="GO:0031526">
    <property type="term" value="C:brush border membrane"/>
    <property type="evidence" value="ECO:0007669"/>
    <property type="project" value="Ensembl"/>
</dbReference>
<dbReference type="GO" id="GO:0016020">
    <property type="term" value="C:membrane"/>
    <property type="evidence" value="ECO:0000250"/>
    <property type="project" value="UniProtKB"/>
</dbReference>
<dbReference type="GO" id="GO:0005886">
    <property type="term" value="C:plasma membrane"/>
    <property type="evidence" value="ECO:0000314"/>
    <property type="project" value="UniProtKB"/>
</dbReference>
<dbReference type="GO" id="GO:0097225">
    <property type="term" value="C:sperm midpiece"/>
    <property type="evidence" value="ECO:0000250"/>
    <property type="project" value="UniProtKB"/>
</dbReference>
<dbReference type="GO" id="GO:0015106">
    <property type="term" value="F:bicarbonate transmembrane transporter activity"/>
    <property type="evidence" value="ECO:0000250"/>
    <property type="project" value="UniProtKB"/>
</dbReference>
<dbReference type="GO" id="GO:0015108">
    <property type="term" value="F:chloride transmembrane transporter activity"/>
    <property type="evidence" value="ECO:0000250"/>
    <property type="project" value="UniProtKB"/>
</dbReference>
<dbReference type="GO" id="GO:0140900">
    <property type="term" value="F:chloride:bicarbonate antiporter activity"/>
    <property type="evidence" value="ECO:0000314"/>
    <property type="project" value="UniProtKB"/>
</dbReference>
<dbReference type="GO" id="GO:0019531">
    <property type="term" value="F:oxalate transmembrane transporter activity"/>
    <property type="evidence" value="ECO:0000318"/>
    <property type="project" value="GO_Central"/>
</dbReference>
<dbReference type="GO" id="GO:0008271">
    <property type="term" value="F:secondary active sulfate transmembrane transporter activity"/>
    <property type="evidence" value="ECO:0007669"/>
    <property type="project" value="InterPro"/>
</dbReference>
<dbReference type="GO" id="GO:0005452">
    <property type="term" value="F:solute:inorganic anion antiporter activity"/>
    <property type="evidence" value="ECO:0000304"/>
    <property type="project" value="Reactome"/>
</dbReference>
<dbReference type="GO" id="GO:0015116">
    <property type="term" value="F:sulfate transmembrane transporter activity"/>
    <property type="evidence" value="ECO:0000318"/>
    <property type="project" value="GO_Central"/>
</dbReference>
<dbReference type="GO" id="GO:0071320">
    <property type="term" value="P:cellular response to cAMP"/>
    <property type="evidence" value="ECO:0000250"/>
    <property type="project" value="UniProtKB"/>
</dbReference>
<dbReference type="GO" id="GO:1902476">
    <property type="term" value="P:chloride transmembrane transport"/>
    <property type="evidence" value="ECO:0000318"/>
    <property type="project" value="GO_Central"/>
</dbReference>
<dbReference type="GO" id="GO:0051454">
    <property type="term" value="P:intracellular pH elevation"/>
    <property type="evidence" value="ECO:0000250"/>
    <property type="project" value="UniProtKB"/>
</dbReference>
<dbReference type="GO" id="GO:0060081">
    <property type="term" value="P:membrane hyperpolarization"/>
    <property type="evidence" value="ECO:0000250"/>
    <property type="project" value="UniProtKB"/>
</dbReference>
<dbReference type="GO" id="GO:0006820">
    <property type="term" value="P:monoatomic anion transport"/>
    <property type="evidence" value="ECO:0000304"/>
    <property type="project" value="ProtInc"/>
</dbReference>
<dbReference type="GO" id="GO:0006811">
    <property type="term" value="P:monoatomic ion transport"/>
    <property type="evidence" value="ECO:0000304"/>
    <property type="project" value="Reactome"/>
</dbReference>
<dbReference type="GO" id="GO:0048240">
    <property type="term" value="P:sperm capacitation"/>
    <property type="evidence" value="ECO:0000250"/>
    <property type="project" value="UniProtKB"/>
</dbReference>
<dbReference type="GO" id="GO:1902358">
    <property type="term" value="P:sulfate transmembrane transport"/>
    <property type="evidence" value="ECO:0000318"/>
    <property type="project" value="GO_Central"/>
</dbReference>
<dbReference type="CDD" id="cd07042">
    <property type="entry name" value="STAS_SulP_like_sulfate_transporter"/>
    <property type="match status" value="1"/>
</dbReference>
<dbReference type="Gene3D" id="3.30.750.24">
    <property type="entry name" value="STAS domain"/>
    <property type="match status" value="1"/>
</dbReference>
<dbReference type="InterPro" id="IPR018045">
    <property type="entry name" value="S04_transporter_CS"/>
</dbReference>
<dbReference type="InterPro" id="IPR011547">
    <property type="entry name" value="SLC26A/SulP_dom"/>
</dbReference>
<dbReference type="InterPro" id="IPR001902">
    <property type="entry name" value="SLC26A/SulP_fam"/>
</dbReference>
<dbReference type="InterPro" id="IPR002645">
    <property type="entry name" value="STAS_dom"/>
</dbReference>
<dbReference type="InterPro" id="IPR036513">
    <property type="entry name" value="STAS_dom_sf"/>
</dbReference>
<dbReference type="NCBIfam" id="TIGR00815">
    <property type="entry name" value="sulP"/>
    <property type="match status" value="1"/>
</dbReference>
<dbReference type="PANTHER" id="PTHR11814">
    <property type="entry name" value="SULFATE TRANSPORTER"/>
    <property type="match status" value="1"/>
</dbReference>
<dbReference type="Pfam" id="PF01740">
    <property type="entry name" value="STAS"/>
    <property type="match status" value="1"/>
</dbReference>
<dbReference type="Pfam" id="PF00916">
    <property type="entry name" value="Sulfate_transp"/>
    <property type="match status" value="1"/>
</dbReference>
<dbReference type="SUPFAM" id="SSF52091">
    <property type="entry name" value="SpoIIaa-like"/>
    <property type="match status" value="1"/>
</dbReference>
<dbReference type="PROSITE" id="PS01130">
    <property type="entry name" value="SLC26A"/>
    <property type="match status" value="1"/>
</dbReference>
<dbReference type="PROSITE" id="PS50801">
    <property type="entry name" value="STAS"/>
    <property type="match status" value="1"/>
</dbReference>
<accession>P40879</accession>